<protein>
    <recommendedName>
        <fullName evidence="1">S-methyl-5'-thioadenosine phosphorylase</fullName>
        <ecNumber evidence="1">2.4.2.28</ecNumber>
    </recommendedName>
    <alternativeName>
        <fullName evidence="1">5'-methylthioadenosine phosphorylase</fullName>
        <shortName evidence="1">MTA phosphorylase</shortName>
        <shortName evidence="1">MTAP</shortName>
        <shortName evidence="1">MTAPase</shortName>
    </alternativeName>
</protein>
<evidence type="ECO:0000255" key="1">
    <source>
        <dbReference type="HAMAP-Rule" id="MF_03155"/>
    </source>
</evidence>
<sequence>MTSNSHVKIGIIGGSGLDDPDILEGRTERYVVTPYGKPSDALILGKIKNVDCVLLARHGRQHTIMPTNVNYQANIWALKEEGCTHLLVTTACGSLREDIQPGDIVLIDQFIDRTTKRVQTFYDGQPTSPPGVCHIPMAEPFCSKTREVLLEVAQGLGVKCHTRGTMVTIEGPRFSSRAESLMFRQWGADVINMTTVPEVVLAKEAGLCYASIAMATDYDCWKEHEEAVCVDNVLKTMKENANKASSILLTAIPQICQMDWDSTINAHKSMSQSSVMLPKH</sequence>
<reference key="1">
    <citation type="journal article" date="2013" name="Nature">
        <title>The zebrafish reference genome sequence and its relationship to the human genome.</title>
        <authorList>
            <person name="Howe K."/>
            <person name="Clark M.D."/>
            <person name="Torroja C.F."/>
            <person name="Torrance J."/>
            <person name="Berthelot C."/>
            <person name="Muffato M."/>
            <person name="Collins J.E."/>
            <person name="Humphray S."/>
            <person name="McLaren K."/>
            <person name="Matthews L."/>
            <person name="McLaren S."/>
            <person name="Sealy I."/>
            <person name="Caccamo M."/>
            <person name="Churcher C."/>
            <person name="Scott C."/>
            <person name="Barrett J.C."/>
            <person name="Koch R."/>
            <person name="Rauch G.J."/>
            <person name="White S."/>
            <person name="Chow W."/>
            <person name="Kilian B."/>
            <person name="Quintais L.T."/>
            <person name="Guerra-Assuncao J.A."/>
            <person name="Zhou Y."/>
            <person name="Gu Y."/>
            <person name="Yen J."/>
            <person name="Vogel J.H."/>
            <person name="Eyre T."/>
            <person name="Redmond S."/>
            <person name="Banerjee R."/>
            <person name="Chi J."/>
            <person name="Fu B."/>
            <person name="Langley E."/>
            <person name="Maguire S.F."/>
            <person name="Laird G.K."/>
            <person name="Lloyd D."/>
            <person name="Kenyon E."/>
            <person name="Donaldson S."/>
            <person name="Sehra H."/>
            <person name="Almeida-King J."/>
            <person name="Loveland J."/>
            <person name="Trevanion S."/>
            <person name="Jones M."/>
            <person name="Quail M."/>
            <person name="Willey D."/>
            <person name="Hunt A."/>
            <person name="Burton J."/>
            <person name="Sims S."/>
            <person name="McLay K."/>
            <person name="Plumb B."/>
            <person name="Davis J."/>
            <person name="Clee C."/>
            <person name="Oliver K."/>
            <person name="Clark R."/>
            <person name="Riddle C."/>
            <person name="Elliot D."/>
            <person name="Threadgold G."/>
            <person name="Harden G."/>
            <person name="Ware D."/>
            <person name="Begum S."/>
            <person name="Mortimore B."/>
            <person name="Kerry G."/>
            <person name="Heath P."/>
            <person name="Phillimore B."/>
            <person name="Tracey A."/>
            <person name="Corby N."/>
            <person name="Dunn M."/>
            <person name="Johnson C."/>
            <person name="Wood J."/>
            <person name="Clark S."/>
            <person name="Pelan S."/>
            <person name="Griffiths G."/>
            <person name="Smith M."/>
            <person name="Glithero R."/>
            <person name="Howden P."/>
            <person name="Barker N."/>
            <person name="Lloyd C."/>
            <person name="Stevens C."/>
            <person name="Harley J."/>
            <person name="Holt K."/>
            <person name="Panagiotidis G."/>
            <person name="Lovell J."/>
            <person name="Beasley H."/>
            <person name="Henderson C."/>
            <person name="Gordon D."/>
            <person name="Auger K."/>
            <person name="Wright D."/>
            <person name="Collins J."/>
            <person name="Raisen C."/>
            <person name="Dyer L."/>
            <person name="Leung K."/>
            <person name="Robertson L."/>
            <person name="Ambridge K."/>
            <person name="Leongamornlert D."/>
            <person name="McGuire S."/>
            <person name="Gilderthorp R."/>
            <person name="Griffiths C."/>
            <person name="Manthravadi D."/>
            <person name="Nichol S."/>
            <person name="Barker G."/>
            <person name="Whitehead S."/>
            <person name="Kay M."/>
            <person name="Brown J."/>
            <person name="Murnane C."/>
            <person name="Gray E."/>
            <person name="Humphries M."/>
            <person name="Sycamore N."/>
            <person name="Barker D."/>
            <person name="Saunders D."/>
            <person name="Wallis J."/>
            <person name="Babbage A."/>
            <person name="Hammond S."/>
            <person name="Mashreghi-Mohammadi M."/>
            <person name="Barr L."/>
            <person name="Martin S."/>
            <person name="Wray P."/>
            <person name="Ellington A."/>
            <person name="Matthews N."/>
            <person name="Ellwood M."/>
            <person name="Woodmansey R."/>
            <person name="Clark G."/>
            <person name="Cooper J."/>
            <person name="Tromans A."/>
            <person name="Grafham D."/>
            <person name="Skuce C."/>
            <person name="Pandian R."/>
            <person name="Andrews R."/>
            <person name="Harrison E."/>
            <person name="Kimberley A."/>
            <person name="Garnett J."/>
            <person name="Fosker N."/>
            <person name="Hall R."/>
            <person name="Garner P."/>
            <person name="Kelly D."/>
            <person name="Bird C."/>
            <person name="Palmer S."/>
            <person name="Gehring I."/>
            <person name="Berger A."/>
            <person name="Dooley C.M."/>
            <person name="Ersan-Urun Z."/>
            <person name="Eser C."/>
            <person name="Geiger H."/>
            <person name="Geisler M."/>
            <person name="Karotki L."/>
            <person name="Kirn A."/>
            <person name="Konantz J."/>
            <person name="Konantz M."/>
            <person name="Oberlander M."/>
            <person name="Rudolph-Geiger S."/>
            <person name="Teucke M."/>
            <person name="Lanz C."/>
            <person name="Raddatz G."/>
            <person name="Osoegawa K."/>
            <person name="Zhu B."/>
            <person name="Rapp A."/>
            <person name="Widaa S."/>
            <person name="Langford C."/>
            <person name="Yang F."/>
            <person name="Schuster S.C."/>
            <person name="Carter N.P."/>
            <person name="Harrow J."/>
            <person name="Ning Z."/>
            <person name="Herrero J."/>
            <person name="Searle S.M."/>
            <person name="Enright A."/>
            <person name="Geisler R."/>
            <person name="Plasterk R.H."/>
            <person name="Lee C."/>
            <person name="Westerfield M."/>
            <person name="de Jong P.J."/>
            <person name="Zon L.I."/>
            <person name="Postlethwait J.H."/>
            <person name="Nusslein-Volhard C."/>
            <person name="Hubbard T.J."/>
            <person name="Roest Crollius H."/>
            <person name="Rogers J."/>
            <person name="Stemple D.L."/>
        </authorList>
    </citation>
    <scope>NUCLEOTIDE SEQUENCE [LARGE SCALE GENOMIC DNA]</scope>
    <source>
        <strain>Tuebingen</strain>
    </source>
</reference>
<reference key="2">
    <citation type="submission" date="2003-08" db="EMBL/GenBank/DDBJ databases">
        <authorList>
            <consortium name="NIH - Zebrafish Gene Collection (ZGC) project"/>
        </authorList>
    </citation>
    <scope>NUCLEOTIDE SEQUENCE [LARGE SCALE MRNA]</scope>
    <source>
        <tissue>Kidney</tissue>
    </source>
</reference>
<gene>
    <name type="primary">mtap</name>
    <name type="ORF">zgc:66012</name>
</gene>
<proteinExistence type="evidence at transcript level"/>
<dbReference type="EC" id="2.4.2.28" evidence="1"/>
<dbReference type="EMBL" id="BX323448">
    <property type="status" value="NOT_ANNOTATED_CDS"/>
    <property type="molecule type" value="Genomic_DNA"/>
</dbReference>
<dbReference type="EMBL" id="BC046035">
    <property type="protein sequence ID" value="AAH46035.2"/>
    <property type="molecule type" value="mRNA"/>
</dbReference>
<dbReference type="EMBL" id="BC056545">
    <property type="protein sequence ID" value="AAH56545.1"/>
    <property type="molecule type" value="mRNA"/>
</dbReference>
<dbReference type="RefSeq" id="NP_956848.1">
    <property type="nucleotide sequence ID" value="NM_200554.1"/>
</dbReference>
<dbReference type="SMR" id="Q7ZV22"/>
<dbReference type="FunCoup" id="Q7ZV22">
    <property type="interactions" value="1357"/>
</dbReference>
<dbReference type="STRING" id="7955.ENSDARP00000054207"/>
<dbReference type="PaxDb" id="7955-ENSDARP00000054207"/>
<dbReference type="Ensembl" id="ENSDART00000054208">
    <property type="protein sequence ID" value="ENSDARP00000054207"/>
    <property type="gene ID" value="ENSDARG00000037261"/>
</dbReference>
<dbReference type="GeneID" id="393526"/>
<dbReference type="KEGG" id="dre:393526"/>
<dbReference type="AGR" id="ZFIN:ZDB-GENE-040426-1505"/>
<dbReference type="CTD" id="4507"/>
<dbReference type="ZFIN" id="ZDB-GENE-040426-1505">
    <property type="gene designation" value="mtap"/>
</dbReference>
<dbReference type="eggNOG" id="KOG3985">
    <property type="taxonomic scope" value="Eukaryota"/>
</dbReference>
<dbReference type="HOGENOM" id="CLU_054456_0_0_1"/>
<dbReference type="InParanoid" id="Q7ZV22"/>
<dbReference type="OMA" id="ADPFCPE"/>
<dbReference type="OrthoDB" id="431409at2759"/>
<dbReference type="PhylomeDB" id="Q7ZV22"/>
<dbReference type="TreeFam" id="TF312883"/>
<dbReference type="Reactome" id="R-DRE-1237112">
    <property type="pathway name" value="Methionine salvage pathway"/>
</dbReference>
<dbReference type="UniPathway" id="UPA00904">
    <property type="reaction ID" value="UER00873"/>
</dbReference>
<dbReference type="PRO" id="PR:Q7ZV22"/>
<dbReference type="Proteomes" id="UP000000437">
    <property type="component" value="Chromosome 1"/>
</dbReference>
<dbReference type="Bgee" id="ENSDARG00000037261">
    <property type="expression patterns" value="Expressed in swim bladder and 27 other cell types or tissues"/>
</dbReference>
<dbReference type="ExpressionAtlas" id="Q7ZV22">
    <property type="expression patterns" value="baseline"/>
</dbReference>
<dbReference type="GO" id="GO:0005829">
    <property type="term" value="C:cytosol"/>
    <property type="evidence" value="ECO:0000318"/>
    <property type="project" value="GO_Central"/>
</dbReference>
<dbReference type="GO" id="GO:0005634">
    <property type="term" value="C:nucleus"/>
    <property type="evidence" value="ECO:0007669"/>
    <property type="project" value="UniProtKB-SubCell"/>
</dbReference>
<dbReference type="GO" id="GO:0017061">
    <property type="term" value="F:S-methyl-5-thioadenosine phosphorylase activity"/>
    <property type="evidence" value="ECO:0000318"/>
    <property type="project" value="GO_Central"/>
</dbReference>
<dbReference type="GO" id="GO:0019509">
    <property type="term" value="P:L-methionine salvage from methylthioadenosine"/>
    <property type="evidence" value="ECO:0000318"/>
    <property type="project" value="GO_Central"/>
</dbReference>
<dbReference type="GO" id="GO:0006166">
    <property type="term" value="P:purine ribonucleoside salvage"/>
    <property type="evidence" value="ECO:0007669"/>
    <property type="project" value="UniProtKB-KW"/>
</dbReference>
<dbReference type="CDD" id="cd09010">
    <property type="entry name" value="MTAP_SsMTAPII_like_MTIP"/>
    <property type="match status" value="1"/>
</dbReference>
<dbReference type="FunFam" id="3.40.50.1580:FF:000006">
    <property type="entry name" value="Purine nucleoside phosphorylase"/>
    <property type="match status" value="1"/>
</dbReference>
<dbReference type="Gene3D" id="3.40.50.1580">
    <property type="entry name" value="Nucleoside phosphorylase domain"/>
    <property type="match status" value="1"/>
</dbReference>
<dbReference type="HAMAP" id="MF_01963">
    <property type="entry name" value="MTAP"/>
    <property type="match status" value="1"/>
</dbReference>
<dbReference type="InterPro" id="IPR010044">
    <property type="entry name" value="MTAP"/>
</dbReference>
<dbReference type="InterPro" id="IPR000845">
    <property type="entry name" value="Nucleoside_phosphorylase_d"/>
</dbReference>
<dbReference type="InterPro" id="IPR035994">
    <property type="entry name" value="Nucleoside_phosphorylase_sf"/>
</dbReference>
<dbReference type="InterPro" id="IPR018099">
    <property type="entry name" value="Purine_phosphorylase-2_CS"/>
</dbReference>
<dbReference type="NCBIfam" id="TIGR01694">
    <property type="entry name" value="MTAP"/>
    <property type="match status" value="1"/>
</dbReference>
<dbReference type="PANTHER" id="PTHR42679">
    <property type="entry name" value="S-METHYL-5'-THIOADENOSINE PHOSPHORYLASE"/>
    <property type="match status" value="1"/>
</dbReference>
<dbReference type="PANTHER" id="PTHR42679:SF2">
    <property type="entry name" value="S-METHYL-5'-THIOADENOSINE PHOSPHORYLASE"/>
    <property type="match status" value="1"/>
</dbReference>
<dbReference type="Pfam" id="PF01048">
    <property type="entry name" value="PNP_UDP_1"/>
    <property type="match status" value="1"/>
</dbReference>
<dbReference type="SUPFAM" id="SSF53167">
    <property type="entry name" value="Purine and uridine phosphorylases"/>
    <property type="match status" value="1"/>
</dbReference>
<dbReference type="PROSITE" id="PS01240">
    <property type="entry name" value="PNP_MTAP_2"/>
    <property type="match status" value="1"/>
</dbReference>
<organism>
    <name type="scientific">Danio rerio</name>
    <name type="common">Zebrafish</name>
    <name type="synonym">Brachydanio rerio</name>
    <dbReference type="NCBI Taxonomy" id="7955"/>
    <lineage>
        <taxon>Eukaryota</taxon>
        <taxon>Metazoa</taxon>
        <taxon>Chordata</taxon>
        <taxon>Craniata</taxon>
        <taxon>Vertebrata</taxon>
        <taxon>Euteleostomi</taxon>
        <taxon>Actinopterygii</taxon>
        <taxon>Neopterygii</taxon>
        <taxon>Teleostei</taxon>
        <taxon>Ostariophysi</taxon>
        <taxon>Cypriniformes</taxon>
        <taxon>Danionidae</taxon>
        <taxon>Danioninae</taxon>
        <taxon>Danio</taxon>
    </lineage>
</organism>
<feature type="chain" id="PRO_0000415114" description="S-methyl-5'-thioadenosine phosphorylase">
    <location>
        <begin position="1"/>
        <end position="280"/>
    </location>
</feature>
<feature type="binding site" evidence="1">
    <location>
        <position position="15"/>
    </location>
    <ligand>
        <name>phosphate</name>
        <dbReference type="ChEBI" id="CHEBI:43474"/>
    </ligand>
</feature>
<feature type="binding site" evidence="1">
    <location>
        <begin position="57"/>
        <end position="58"/>
    </location>
    <ligand>
        <name>phosphate</name>
        <dbReference type="ChEBI" id="CHEBI:43474"/>
    </ligand>
</feature>
<feature type="binding site" evidence="1">
    <location>
        <begin position="90"/>
        <end position="91"/>
    </location>
    <ligand>
        <name>phosphate</name>
        <dbReference type="ChEBI" id="CHEBI:43474"/>
    </ligand>
</feature>
<feature type="binding site" evidence="1">
    <location>
        <position position="193"/>
    </location>
    <ligand>
        <name>substrate</name>
    </ligand>
</feature>
<feature type="binding site" evidence="1">
    <location>
        <position position="194"/>
    </location>
    <ligand>
        <name>phosphate</name>
        <dbReference type="ChEBI" id="CHEBI:43474"/>
    </ligand>
</feature>
<feature type="binding site" evidence="1">
    <location>
        <begin position="217"/>
        <end position="219"/>
    </location>
    <ligand>
        <name>substrate</name>
    </ligand>
</feature>
<feature type="site" description="Important for substrate specificity" evidence="1">
    <location>
        <position position="175"/>
    </location>
</feature>
<feature type="site" description="Important for substrate specificity" evidence="1">
    <location>
        <position position="230"/>
    </location>
</feature>
<keyword id="KW-0963">Cytoplasm</keyword>
<keyword id="KW-0328">Glycosyltransferase</keyword>
<keyword id="KW-0539">Nucleus</keyword>
<keyword id="KW-0660">Purine salvage</keyword>
<keyword id="KW-1185">Reference proteome</keyword>
<keyword id="KW-0808">Transferase</keyword>
<comment type="function">
    <text evidence="1">Catalyzes the reversible phosphorylation of S-methyl-5'-thioadenosine (MTA) to adenine and 5-methylthioribose-1-phosphate. Involved in the breakdown of MTA, a major by-product of polyamine biosynthesis. Responsible for the first step in the methionine salvage pathway after MTA has been generated from S-adenosylmethionine. Has broad substrate specificity with 6-aminopurine nucleosides as preferred substrates.</text>
</comment>
<comment type="catalytic activity">
    <reaction evidence="1">
        <text>S-methyl-5'-thioadenosine + phosphate = 5-(methylsulfanyl)-alpha-D-ribose 1-phosphate + adenine</text>
        <dbReference type="Rhea" id="RHEA:11852"/>
        <dbReference type="ChEBI" id="CHEBI:16708"/>
        <dbReference type="ChEBI" id="CHEBI:17509"/>
        <dbReference type="ChEBI" id="CHEBI:43474"/>
        <dbReference type="ChEBI" id="CHEBI:58533"/>
        <dbReference type="EC" id="2.4.2.28"/>
    </reaction>
</comment>
<comment type="pathway">
    <text evidence="1">Amino-acid biosynthesis; L-methionine biosynthesis via salvage pathway; S-methyl-5-thio-alpha-D-ribose 1-phosphate from S-methyl-5'-thioadenosine (phosphorylase route): step 1/1.</text>
</comment>
<comment type="subunit">
    <text evidence="1">Homotrimer.</text>
</comment>
<comment type="subcellular location">
    <subcellularLocation>
        <location evidence="1">Cytoplasm</location>
    </subcellularLocation>
    <subcellularLocation>
        <location evidence="1">Nucleus</location>
    </subcellularLocation>
</comment>
<comment type="similarity">
    <text evidence="1">Belongs to the PNP/MTAP phosphorylase family. MTAP subfamily.</text>
</comment>
<name>MTAP_DANRE</name>
<accession>Q7ZV22</accession>
<accession>Q6PHI0</accession>